<evidence type="ECO:0000255" key="1">
    <source>
        <dbReference type="HAMAP-Rule" id="MF_01306"/>
    </source>
</evidence>
<evidence type="ECO:0000305" key="2"/>
<gene>
    <name evidence="1" type="primary">rpsD</name>
    <name type="ordered locus">ML1958</name>
    <name type="ORF">MLCB1222.28c</name>
</gene>
<feature type="chain" id="PRO_0000132421" description="Small ribosomal subunit protein uS4">
    <location>
        <begin position="1"/>
        <end position="201"/>
    </location>
</feature>
<feature type="domain" description="S4 RNA-binding" evidence="1">
    <location>
        <begin position="91"/>
        <end position="157"/>
    </location>
</feature>
<keyword id="KW-1185">Reference proteome</keyword>
<keyword id="KW-0687">Ribonucleoprotein</keyword>
<keyword id="KW-0689">Ribosomal protein</keyword>
<keyword id="KW-0694">RNA-binding</keyword>
<keyword id="KW-0699">rRNA-binding</keyword>
<sequence>MARYTGPITRKSRRLRIDLVGGDQAFEKRPYPPGQHGRARIKESEYLLQLQEKQKARFTYGVMEKQFRRYYEEAVRQPGKTGEELLKILESRLDNVIYRAGLARTRRMARQLVSHGHFSVNGVHVNVPSYRVSQYDIIDIRDKSLDTVPFQIARETVGDRPIPSWLQVVGEHQRILIHQLPERVQIEVPLIEQLIVEYYSK</sequence>
<proteinExistence type="inferred from homology"/>
<dbReference type="EMBL" id="AL049491">
    <property type="protein sequence ID" value="CAB39834.1"/>
    <property type="molecule type" value="Genomic_DNA"/>
</dbReference>
<dbReference type="EMBL" id="AL583923">
    <property type="protein sequence ID" value="CAC30913.1"/>
    <property type="molecule type" value="Genomic_DNA"/>
</dbReference>
<dbReference type="PIR" id="A87154">
    <property type="entry name" value="A87154"/>
</dbReference>
<dbReference type="RefSeq" id="NP_302323.1">
    <property type="nucleotide sequence ID" value="NC_002677.1"/>
</dbReference>
<dbReference type="RefSeq" id="WP_010908644.1">
    <property type="nucleotide sequence ID" value="NC_002677.1"/>
</dbReference>
<dbReference type="SMR" id="Q9X799"/>
<dbReference type="STRING" id="272631.gene:17575810"/>
<dbReference type="KEGG" id="mle:ML1958"/>
<dbReference type="PATRIC" id="fig|272631.5.peg.3708"/>
<dbReference type="Leproma" id="ML1958"/>
<dbReference type="eggNOG" id="COG0522">
    <property type="taxonomic scope" value="Bacteria"/>
</dbReference>
<dbReference type="HOGENOM" id="CLU_092403_0_2_11"/>
<dbReference type="OrthoDB" id="9803672at2"/>
<dbReference type="Proteomes" id="UP000000806">
    <property type="component" value="Chromosome"/>
</dbReference>
<dbReference type="GO" id="GO:0015935">
    <property type="term" value="C:small ribosomal subunit"/>
    <property type="evidence" value="ECO:0007669"/>
    <property type="project" value="InterPro"/>
</dbReference>
<dbReference type="GO" id="GO:0019843">
    <property type="term" value="F:rRNA binding"/>
    <property type="evidence" value="ECO:0007669"/>
    <property type="project" value="UniProtKB-UniRule"/>
</dbReference>
<dbReference type="GO" id="GO:0003735">
    <property type="term" value="F:structural constituent of ribosome"/>
    <property type="evidence" value="ECO:0007669"/>
    <property type="project" value="InterPro"/>
</dbReference>
<dbReference type="GO" id="GO:0042274">
    <property type="term" value="P:ribosomal small subunit biogenesis"/>
    <property type="evidence" value="ECO:0007669"/>
    <property type="project" value="TreeGrafter"/>
</dbReference>
<dbReference type="GO" id="GO:0006412">
    <property type="term" value="P:translation"/>
    <property type="evidence" value="ECO:0007669"/>
    <property type="project" value="UniProtKB-UniRule"/>
</dbReference>
<dbReference type="CDD" id="cd00165">
    <property type="entry name" value="S4"/>
    <property type="match status" value="1"/>
</dbReference>
<dbReference type="FunFam" id="3.10.290.10:FF:000001">
    <property type="entry name" value="30S ribosomal protein S4"/>
    <property type="match status" value="1"/>
</dbReference>
<dbReference type="Gene3D" id="1.10.1050.10">
    <property type="entry name" value="Ribosomal Protein S4 Delta 41, Chain A, domain 1"/>
    <property type="match status" value="1"/>
</dbReference>
<dbReference type="Gene3D" id="3.10.290.10">
    <property type="entry name" value="RNA-binding S4 domain"/>
    <property type="match status" value="1"/>
</dbReference>
<dbReference type="HAMAP" id="MF_01306_B">
    <property type="entry name" value="Ribosomal_uS4_B"/>
    <property type="match status" value="1"/>
</dbReference>
<dbReference type="InterPro" id="IPR022801">
    <property type="entry name" value="Ribosomal_uS4"/>
</dbReference>
<dbReference type="InterPro" id="IPR005709">
    <property type="entry name" value="Ribosomal_uS4_bac-type"/>
</dbReference>
<dbReference type="InterPro" id="IPR018079">
    <property type="entry name" value="Ribosomal_uS4_CS"/>
</dbReference>
<dbReference type="InterPro" id="IPR001912">
    <property type="entry name" value="Ribosomal_uS4_N"/>
</dbReference>
<dbReference type="InterPro" id="IPR002942">
    <property type="entry name" value="S4_RNA-bd"/>
</dbReference>
<dbReference type="InterPro" id="IPR036986">
    <property type="entry name" value="S4_RNA-bd_sf"/>
</dbReference>
<dbReference type="NCBIfam" id="NF003717">
    <property type="entry name" value="PRK05327.1"/>
    <property type="match status" value="1"/>
</dbReference>
<dbReference type="NCBIfam" id="TIGR01017">
    <property type="entry name" value="rpsD_bact"/>
    <property type="match status" value="1"/>
</dbReference>
<dbReference type="PANTHER" id="PTHR11831">
    <property type="entry name" value="30S 40S RIBOSOMAL PROTEIN"/>
    <property type="match status" value="1"/>
</dbReference>
<dbReference type="PANTHER" id="PTHR11831:SF4">
    <property type="entry name" value="SMALL RIBOSOMAL SUBUNIT PROTEIN US4M"/>
    <property type="match status" value="1"/>
</dbReference>
<dbReference type="Pfam" id="PF00163">
    <property type="entry name" value="Ribosomal_S4"/>
    <property type="match status" value="1"/>
</dbReference>
<dbReference type="Pfam" id="PF01479">
    <property type="entry name" value="S4"/>
    <property type="match status" value="1"/>
</dbReference>
<dbReference type="SMART" id="SM01390">
    <property type="entry name" value="Ribosomal_S4"/>
    <property type="match status" value="1"/>
</dbReference>
<dbReference type="SMART" id="SM00363">
    <property type="entry name" value="S4"/>
    <property type="match status" value="1"/>
</dbReference>
<dbReference type="SUPFAM" id="SSF55174">
    <property type="entry name" value="Alpha-L RNA-binding motif"/>
    <property type="match status" value="1"/>
</dbReference>
<dbReference type="PROSITE" id="PS00632">
    <property type="entry name" value="RIBOSOMAL_S4"/>
    <property type="match status" value="1"/>
</dbReference>
<dbReference type="PROSITE" id="PS50889">
    <property type="entry name" value="S4"/>
    <property type="match status" value="1"/>
</dbReference>
<accession>Q9X799</accession>
<organism>
    <name type="scientific">Mycobacterium leprae (strain TN)</name>
    <dbReference type="NCBI Taxonomy" id="272631"/>
    <lineage>
        <taxon>Bacteria</taxon>
        <taxon>Bacillati</taxon>
        <taxon>Actinomycetota</taxon>
        <taxon>Actinomycetes</taxon>
        <taxon>Mycobacteriales</taxon>
        <taxon>Mycobacteriaceae</taxon>
        <taxon>Mycobacterium</taxon>
    </lineage>
</organism>
<reference key="1">
    <citation type="journal article" date="2001" name="Nature">
        <title>Massive gene decay in the leprosy bacillus.</title>
        <authorList>
            <person name="Cole S.T."/>
            <person name="Eiglmeier K."/>
            <person name="Parkhill J."/>
            <person name="James K.D."/>
            <person name="Thomson N.R."/>
            <person name="Wheeler P.R."/>
            <person name="Honore N."/>
            <person name="Garnier T."/>
            <person name="Churcher C.M."/>
            <person name="Harris D.E."/>
            <person name="Mungall K.L."/>
            <person name="Basham D."/>
            <person name="Brown D."/>
            <person name="Chillingworth T."/>
            <person name="Connor R."/>
            <person name="Davies R.M."/>
            <person name="Devlin K."/>
            <person name="Duthoy S."/>
            <person name="Feltwell T."/>
            <person name="Fraser A."/>
            <person name="Hamlin N."/>
            <person name="Holroyd S."/>
            <person name="Hornsby T."/>
            <person name="Jagels K."/>
            <person name="Lacroix C."/>
            <person name="Maclean J."/>
            <person name="Moule S."/>
            <person name="Murphy L.D."/>
            <person name="Oliver K."/>
            <person name="Quail M.A."/>
            <person name="Rajandream M.A."/>
            <person name="Rutherford K.M."/>
            <person name="Rutter S."/>
            <person name="Seeger K."/>
            <person name="Simon S."/>
            <person name="Simmonds M."/>
            <person name="Skelton J."/>
            <person name="Squares R."/>
            <person name="Squares S."/>
            <person name="Stevens K."/>
            <person name="Taylor K."/>
            <person name="Whitehead S."/>
            <person name="Woodward J.R."/>
            <person name="Barrell B.G."/>
        </authorList>
    </citation>
    <scope>NUCLEOTIDE SEQUENCE [LARGE SCALE GENOMIC DNA]</scope>
    <source>
        <strain>TN</strain>
    </source>
</reference>
<comment type="function">
    <text evidence="1">One of the primary rRNA binding proteins, it binds directly to 16S rRNA where it nucleates assembly of the body of the 30S subunit.</text>
</comment>
<comment type="function">
    <text evidence="1">With S5 and S12 plays an important role in translational accuracy.</text>
</comment>
<comment type="subunit">
    <text evidence="1">Part of the 30S ribosomal subunit. Contacts protein S5. The interaction surface between S4 and S5 is involved in control of translational fidelity.</text>
</comment>
<comment type="similarity">
    <text evidence="1">Belongs to the universal ribosomal protein uS4 family.</text>
</comment>
<name>RS4_MYCLE</name>
<protein>
    <recommendedName>
        <fullName evidence="1">Small ribosomal subunit protein uS4</fullName>
    </recommendedName>
    <alternativeName>
        <fullName evidence="2">30S ribosomal protein S4</fullName>
    </alternativeName>
</protein>